<keyword id="KW-0002">3D-structure</keyword>
<keyword id="KW-0009">Actin-binding</keyword>
<keyword id="KW-0025">Alternative splicing</keyword>
<keyword id="KW-1003">Cell membrane</keyword>
<keyword id="KW-0963">Cytoplasm</keyword>
<keyword id="KW-0206">Cytoskeleton</keyword>
<keyword id="KW-0472">Membrane</keyword>
<keyword id="KW-1267">Proteomics identification</keyword>
<keyword id="KW-1185">Reference proteome</keyword>
<accession>Q9NY99</accession>
<accession>Q05AH5</accession>
<protein>
    <recommendedName>
        <fullName>Gamma-2-syntrophin</fullName>
        <shortName>G2SYN</shortName>
    </recommendedName>
    <alternativeName>
        <fullName>Syntrophin-5</fullName>
        <shortName>SYN5</shortName>
    </alternativeName>
</protein>
<feature type="chain" id="PRO_0000184015" description="Gamma-2-syntrophin">
    <location>
        <begin position="1"/>
        <end position="539"/>
    </location>
</feature>
<feature type="domain" description="PDZ" evidence="2">
    <location>
        <begin position="73"/>
        <end position="156"/>
    </location>
</feature>
<feature type="domain" description="PH">
    <location>
        <begin position="296"/>
        <end position="421"/>
    </location>
</feature>
<feature type="region of interest" description="Disordered" evidence="3">
    <location>
        <begin position="168"/>
        <end position="209"/>
    </location>
</feature>
<feature type="compositionally biased region" description="Low complexity" evidence="3">
    <location>
        <begin position="168"/>
        <end position="183"/>
    </location>
</feature>
<feature type="compositionally biased region" description="Low complexity" evidence="3">
    <location>
        <begin position="194"/>
        <end position="205"/>
    </location>
</feature>
<feature type="splice variant" id="VSP_039175" description="In isoform 2." evidence="5">
    <location>
        <begin position="71"/>
        <end position="197"/>
    </location>
</feature>
<feature type="sequence variant" id="VAR_034501" description="In dbSNP:rs28505970.">
    <original>S</original>
    <variation>Y</variation>
    <location>
        <position position="168"/>
    </location>
</feature>
<feature type="sequence variant" id="VAR_034502" description="In dbSNP:rs6751090.">
    <original>S</original>
    <variation>L</variation>
    <location>
        <position position="200"/>
    </location>
</feature>
<feature type="sequence variant" id="VAR_034503" description="In dbSNP:rs13023962.">
    <original>I</original>
    <variation>V</variation>
    <location>
        <position position="391"/>
    </location>
</feature>
<feature type="sequence conflict" description="In Ref. 1; CAB92969 and 3; AAI25252." evidence="6" ref="1 3">
    <original>T</original>
    <variation>M</variation>
    <location>
        <position position="495"/>
    </location>
</feature>
<feature type="strand" evidence="7">
    <location>
        <begin position="72"/>
        <end position="77"/>
    </location>
</feature>
<feature type="turn" evidence="7">
    <location>
        <begin position="80"/>
        <end position="82"/>
    </location>
</feature>
<feature type="strand" evidence="7">
    <location>
        <begin position="86"/>
        <end position="91"/>
    </location>
</feature>
<feature type="helix" evidence="7">
    <location>
        <begin position="92"/>
        <end position="94"/>
    </location>
</feature>
<feature type="strand" evidence="7">
    <location>
        <begin position="96"/>
        <end position="103"/>
    </location>
</feature>
<feature type="helix" evidence="7">
    <location>
        <begin position="108"/>
        <end position="112"/>
    </location>
</feature>
<feature type="strand" evidence="7">
    <location>
        <begin position="120"/>
        <end position="124"/>
    </location>
</feature>
<feature type="helix" evidence="7">
    <location>
        <begin position="134"/>
        <end position="142"/>
    </location>
</feature>
<feature type="strand" evidence="7">
    <location>
        <begin position="146"/>
        <end position="153"/>
    </location>
</feature>
<sequence>MGTEGPPPPAASRGRQGCLLVPARTKTTIALLYDEESENAYDIRLKLTKEVLTIQKQDVVCVGGSHQGRNRRTVTLRRQPVGGLGLSIKGGSEHNVPVVISKIFEDQAADQTGMLFVGDAVLQVNGIHVENATHEEVVHLLRNAGDEVTITVEYLREAPAFLKLPLGSPGPSSDHSSGASSPLFDSGLHLNGNSSTTAPSSPSSPIAKDPRYEKRWLDTLSVPLSMARISRYKAGTEKLRWNAFEVLALDGVSSGILRFYTAQDGTDWLRAVSANIRELTLQNMKMANKCCSPSDQVVHMGWVNEKLQGADSSQTFRPKFLALKGPSFYVFSTPPVSTFDWVRAERTYHLCEVLFKVHKFWLTEDCWLQANLYLGLQDFDFEDQRPYCFSIVAGHGKSHVFNVELGSELAMWEKSFQRATFMEVQRTGSRTYMCSWQGEMLCFTVDFALGFTCFESKTKNVLWRFKFSQLKGSSDDGKTRVKLLFQNLDTKQIETKELEFQDLRAVLHCIHSFIAAKVASVDPGFMDSQSLARKYMYSS</sequence>
<organism>
    <name type="scientific">Homo sapiens</name>
    <name type="common">Human</name>
    <dbReference type="NCBI Taxonomy" id="9606"/>
    <lineage>
        <taxon>Eukaryota</taxon>
        <taxon>Metazoa</taxon>
        <taxon>Chordata</taxon>
        <taxon>Craniata</taxon>
        <taxon>Vertebrata</taxon>
        <taxon>Euteleostomi</taxon>
        <taxon>Mammalia</taxon>
        <taxon>Eutheria</taxon>
        <taxon>Euarchontoglires</taxon>
        <taxon>Primates</taxon>
        <taxon>Haplorrhini</taxon>
        <taxon>Catarrhini</taxon>
        <taxon>Hominidae</taxon>
        <taxon>Homo</taxon>
    </lineage>
</organism>
<reference key="1">
    <citation type="journal article" date="2000" name="J. Biol. Chem.">
        <title>Gamma1- and gamma2-syntrophins, two novel dystrophin-binding proteins localized in neuronal cells.</title>
        <authorList>
            <person name="Piluso G."/>
            <person name="Mirabella M."/>
            <person name="Ricci E."/>
            <person name="Belsito A."/>
            <person name="Abbondanza C."/>
            <person name="Servidei S."/>
            <person name="Puca A.A."/>
            <person name="Tonali P."/>
            <person name="Puca G.A."/>
            <person name="Nigro V."/>
        </authorList>
    </citation>
    <scope>NUCLEOTIDE SEQUENCE [MRNA] (ISOFORM 1)</scope>
    <scope>TISSUE SPECIFICITY</scope>
    <scope>INTERACTION WITH DMD; DTNA AND DTNB</scope>
    <source>
        <tissue>Fetal brain</tissue>
        <tissue>Neuron</tissue>
    </source>
</reference>
<reference key="2">
    <citation type="journal article" date="2005" name="Nature">
        <title>Generation and annotation of the DNA sequences of human chromosomes 2 and 4.</title>
        <authorList>
            <person name="Hillier L.W."/>
            <person name="Graves T.A."/>
            <person name="Fulton R.S."/>
            <person name="Fulton L.A."/>
            <person name="Pepin K.H."/>
            <person name="Minx P."/>
            <person name="Wagner-McPherson C."/>
            <person name="Layman D."/>
            <person name="Wylie K."/>
            <person name="Sekhon M."/>
            <person name="Becker M.C."/>
            <person name="Fewell G.A."/>
            <person name="Delehaunty K.D."/>
            <person name="Miner T.L."/>
            <person name="Nash W.E."/>
            <person name="Kremitzki C."/>
            <person name="Oddy L."/>
            <person name="Du H."/>
            <person name="Sun H."/>
            <person name="Bradshaw-Cordum H."/>
            <person name="Ali J."/>
            <person name="Carter J."/>
            <person name="Cordes M."/>
            <person name="Harris A."/>
            <person name="Isak A."/>
            <person name="van Brunt A."/>
            <person name="Nguyen C."/>
            <person name="Du F."/>
            <person name="Courtney L."/>
            <person name="Kalicki J."/>
            <person name="Ozersky P."/>
            <person name="Abbott S."/>
            <person name="Armstrong J."/>
            <person name="Belter E.A."/>
            <person name="Caruso L."/>
            <person name="Cedroni M."/>
            <person name="Cotton M."/>
            <person name="Davidson T."/>
            <person name="Desai A."/>
            <person name="Elliott G."/>
            <person name="Erb T."/>
            <person name="Fronick C."/>
            <person name="Gaige T."/>
            <person name="Haakenson W."/>
            <person name="Haglund K."/>
            <person name="Holmes A."/>
            <person name="Harkins R."/>
            <person name="Kim K."/>
            <person name="Kruchowski S.S."/>
            <person name="Strong C.M."/>
            <person name="Grewal N."/>
            <person name="Goyea E."/>
            <person name="Hou S."/>
            <person name="Levy A."/>
            <person name="Martinka S."/>
            <person name="Mead K."/>
            <person name="McLellan M.D."/>
            <person name="Meyer R."/>
            <person name="Randall-Maher J."/>
            <person name="Tomlinson C."/>
            <person name="Dauphin-Kohlberg S."/>
            <person name="Kozlowicz-Reilly A."/>
            <person name="Shah N."/>
            <person name="Swearengen-Shahid S."/>
            <person name="Snider J."/>
            <person name="Strong J.T."/>
            <person name="Thompson J."/>
            <person name="Yoakum M."/>
            <person name="Leonard S."/>
            <person name="Pearman C."/>
            <person name="Trani L."/>
            <person name="Radionenko M."/>
            <person name="Waligorski J.E."/>
            <person name="Wang C."/>
            <person name="Rock S.M."/>
            <person name="Tin-Wollam A.-M."/>
            <person name="Maupin R."/>
            <person name="Latreille P."/>
            <person name="Wendl M.C."/>
            <person name="Yang S.-P."/>
            <person name="Pohl C."/>
            <person name="Wallis J.W."/>
            <person name="Spieth J."/>
            <person name="Bieri T.A."/>
            <person name="Berkowicz N."/>
            <person name="Nelson J.O."/>
            <person name="Osborne J."/>
            <person name="Ding L."/>
            <person name="Meyer R."/>
            <person name="Sabo A."/>
            <person name="Shotland Y."/>
            <person name="Sinha P."/>
            <person name="Wohldmann P.E."/>
            <person name="Cook L.L."/>
            <person name="Hickenbotham M.T."/>
            <person name="Eldred J."/>
            <person name="Williams D."/>
            <person name="Jones T.A."/>
            <person name="She X."/>
            <person name="Ciccarelli F.D."/>
            <person name="Izaurralde E."/>
            <person name="Taylor J."/>
            <person name="Schmutz J."/>
            <person name="Myers R.M."/>
            <person name="Cox D.R."/>
            <person name="Huang X."/>
            <person name="McPherson J.D."/>
            <person name="Mardis E.R."/>
            <person name="Clifton S.W."/>
            <person name="Warren W.C."/>
            <person name="Chinwalla A.T."/>
            <person name="Eddy S.R."/>
            <person name="Marra M.A."/>
            <person name="Ovcharenko I."/>
            <person name="Furey T.S."/>
            <person name="Miller W."/>
            <person name="Eichler E.E."/>
            <person name="Bork P."/>
            <person name="Suyama M."/>
            <person name="Torrents D."/>
            <person name="Waterston R.H."/>
            <person name="Wilson R.K."/>
        </authorList>
    </citation>
    <scope>NUCLEOTIDE SEQUENCE [LARGE SCALE GENOMIC DNA]</scope>
</reference>
<reference key="3">
    <citation type="journal article" date="2004" name="Genome Res.">
        <title>The status, quality, and expansion of the NIH full-length cDNA project: the Mammalian Gene Collection (MGC).</title>
        <authorList>
            <consortium name="The MGC Project Team"/>
        </authorList>
    </citation>
    <scope>NUCLEOTIDE SEQUENCE [LARGE SCALE MRNA] (ISOFORM 2)</scope>
</reference>
<evidence type="ECO:0000250" key="1"/>
<evidence type="ECO:0000255" key="2">
    <source>
        <dbReference type="PROSITE-ProRule" id="PRU00143"/>
    </source>
</evidence>
<evidence type="ECO:0000256" key="3">
    <source>
        <dbReference type="SAM" id="MobiDB-lite"/>
    </source>
</evidence>
<evidence type="ECO:0000269" key="4">
    <source>
    </source>
</evidence>
<evidence type="ECO:0000303" key="5">
    <source>
    </source>
</evidence>
<evidence type="ECO:0000305" key="6"/>
<evidence type="ECO:0007829" key="7">
    <source>
        <dbReference type="PDB" id="7QQL"/>
    </source>
</evidence>
<gene>
    <name type="primary">SNTG2</name>
</gene>
<comment type="function">
    <text evidence="1">Adapter protein that binds to and probably organizes the subcellular localization of a variety of proteins. May link various receptors to the actin cytoskeleton and the dystrophin glycoprotein complex (By similarity).</text>
</comment>
<comment type="subunit">
    <text evidence="4">Interacts with the dystrophin protein DMD and related proteins DTNA and DTNB.</text>
</comment>
<comment type="interaction">
    <interactant intactId="EBI-8556870">
        <id>Q9NY99</id>
    </interactant>
    <interactant intactId="EBI-740402">
        <id>O60941</id>
        <label>DTNB</label>
    </interactant>
    <organismsDiffer>false</organismsDiffer>
    <experiments>3</experiments>
</comment>
<comment type="interaction">
    <interactant intactId="EBI-18173613">
        <id>Q9NY99-2</id>
    </interactant>
    <interactant intactId="EBI-11984733">
        <id>O60941-5</id>
        <label>DTNB</label>
    </interactant>
    <organismsDiffer>false</organismsDiffer>
    <experiments>3</experiments>
</comment>
<comment type="interaction">
    <interactant intactId="EBI-18173613">
        <id>Q9NY99-2</id>
    </interactant>
    <interactant intactId="EBI-2548751">
        <id>Q8TD10</id>
        <label>MIPOL1</label>
    </interactant>
    <organismsDiffer>false</organismsDiffer>
    <experiments>3</experiments>
</comment>
<comment type="interaction">
    <interactant intactId="EBI-18173613">
        <id>Q9NY99-2</id>
    </interactant>
    <interactant intactId="EBI-2513978">
        <id>Q8N3R9</id>
        <label>PALS1</label>
    </interactant>
    <organismsDiffer>false</organismsDiffer>
    <experiments>3</experiments>
</comment>
<comment type="subcellular location">
    <subcellularLocation>
        <location>Cell membrane</location>
        <location>Sarcolemma</location>
        <topology>Peripheral membrane protein</topology>
        <orientation>Cytoplasmic side</orientation>
    </subcellularLocation>
    <subcellularLocation>
        <location>Cytoplasm</location>
        <location>Cytoskeleton</location>
    </subcellularLocation>
    <text>In skeletal muscle, it localizes at the cytoplasmic side of the sarcolemmal membrane.</text>
</comment>
<comment type="alternative products">
    <event type="alternative splicing"/>
    <isoform>
        <id>Q9NY99-1</id>
        <name>1</name>
        <sequence type="displayed"/>
    </isoform>
    <isoform>
        <id>Q9NY99-2</id>
        <name>2</name>
        <sequence type="described" ref="VSP_039175"/>
    </isoform>
</comment>
<comment type="tissue specificity">
    <text evidence="4">Widely expressed. Strong expression in brain and testis. In CNS, it is expressed in the perikaryon and proximal portion of the neuronal processes. Strong expression in the hippocampus, neuron-rich dendate granule cells, and pyramidal cell layers. Highly expressed in neurons of the cerebral cortex. Also expressed in the cerebellar cortex, deep cerebellar nuclei, thalamus, and basal ganglia.</text>
</comment>
<comment type="domain">
    <text evidence="1">The association with dystrophin or related proteins probably leaves the PDZ domain available to recruit proteins to the membrane.</text>
</comment>
<comment type="similarity">
    <text evidence="6">Belongs to the syntrophin family.</text>
</comment>
<dbReference type="EMBL" id="AJ003029">
    <property type="protein sequence ID" value="CAB92969.1"/>
    <property type="molecule type" value="mRNA"/>
</dbReference>
<dbReference type="EMBL" id="AC108462">
    <property type="status" value="NOT_ANNOTATED_CDS"/>
    <property type="molecule type" value="Genomic_DNA"/>
</dbReference>
<dbReference type="EMBL" id="AC114808">
    <property type="status" value="NOT_ANNOTATED_CDS"/>
    <property type="molecule type" value="Genomic_DNA"/>
</dbReference>
<dbReference type="EMBL" id="AC116614">
    <property type="status" value="NOT_ANNOTATED_CDS"/>
    <property type="molecule type" value="Genomic_DNA"/>
</dbReference>
<dbReference type="EMBL" id="AC140476">
    <property type="status" value="NOT_ANNOTATED_CDS"/>
    <property type="molecule type" value="Genomic_DNA"/>
</dbReference>
<dbReference type="EMBL" id="AC144444">
    <property type="status" value="NOT_ANNOTATED_CDS"/>
    <property type="molecule type" value="Genomic_DNA"/>
</dbReference>
<dbReference type="EMBL" id="AC144527">
    <property type="status" value="NOT_ANNOTATED_CDS"/>
    <property type="molecule type" value="Genomic_DNA"/>
</dbReference>
<dbReference type="EMBL" id="AC225604">
    <property type="status" value="NOT_ANNOTATED_CDS"/>
    <property type="molecule type" value="Genomic_DNA"/>
</dbReference>
<dbReference type="EMBL" id="BC125251">
    <property type="protein sequence ID" value="AAI25252.1"/>
    <property type="molecule type" value="mRNA"/>
</dbReference>
<dbReference type="CCDS" id="CCDS46220.1">
    <molecule id="Q9NY99-1"/>
</dbReference>
<dbReference type="RefSeq" id="NP_061841.2">
    <molecule id="Q9NY99-1"/>
    <property type="nucleotide sequence ID" value="NM_018968.4"/>
</dbReference>
<dbReference type="PDB" id="7QQL">
    <property type="method" value="X-ray"/>
    <property type="resolution" value="2.44 A"/>
    <property type="chains" value="A/B/C=70-159"/>
</dbReference>
<dbReference type="PDBsum" id="7QQL"/>
<dbReference type="SMR" id="Q9NY99"/>
<dbReference type="BioGRID" id="119929">
    <property type="interactions" value="25"/>
</dbReference>
<dbReference type="FunCoup" id="Q9NY99">
    <property type="interactions" value="1004"/>
</dbReference>
<dbReference type="IntAct" id="Q9NY99">
    <property type="interactions" value="13"/>
</dbReference>
<dbReference type="MINT" id="Q9NY99"/>
<dbReference type="STRING" id="9606.ENSP00000311837"/>
<dbReference type="GlyCosmos" id="Q9NY99">
    <property type="glycosylation" value="1 site, 2 glycans"/>
</dbReference>
<dbReference type="GlyGen" id="Q9NY99">
    <property type="glycosylation" value="1 site, 2 O-linked glycans (1 site)"/>
</dbReference>
<dbReference type="iPTMnet" id="Q9NY99"/>
<dbReference type="PhosphoSitePlus" id="Q9NY99"/>
<dbReference type="BioMuta" id="SNTG2"/>
<dbReference type="DMDM" id="296452909"/>
<dbReference type="jPOST" id="Q9NY99"/>
<dbReference type="MassIVE" id="Q9NY99"/>
<dbReference type="PaxDb" id="9606-ENSP00000311837"/>
<dbReference type="PeptideAtlas" id="Q9NY99"/>
<dbReference type="ProteomicsDB" id="83200">
    <molecule id="Q9NY99-1"/>
</dbReference>
<dbReference type="ProteomicsDB" id="83201">
    <molecule id="Q9NY99-2"/>
</dbReference>
<dbReference type="Antibodypedia" id="26199">
    <property type="antibodies" value="77 antibodies from 21 providers"/>
</dbReference>
<dbReference type="DNASU" id="54221"/>
<dbReference type="Ensembl" id="ENST00000308624.10">
    <molecule id="Q9NY99-1"/>
    <property type="protein sequence ID" value="ENSP00000311837.5"/>
    <property type="gene ID" value="ENSG00000172554.12"/>
</dbReference>
<dbReference type="Ensembl" id="ENST00000407292.1">
    <molecule id="Q9NY99-2"/>
    <property type="protein sequence ID" value="ENSP00000385020.1"/>
    <property type="gene ID" value="ENSG00000172554.12"/>
</dbReference>
<dbReference type="GeneID" id="54221"/>
<dbReference type="KEGG" id="hsa:54221"/>
<dbReference type="MANE-Select" id="ENST00000308624.10">
    <property type="protein sequence ID" value="ENSP00000311837.5"/>
    <property type="RefSeq nucleotide sequence ID" value="NM_018968.4"/>
    <property type="RefSeq protein sequence ID" value="NP_061841.2"/>
</dbReference>
<dbReference type="UCSC" id="uc002qwq.4">
    <molecule id="Q9NY99-1"/>
    <property type="organism name" value="human"/>
</dbReference>
<dbReference type="AGR" id="HGNC:13741"/>
<dbReference type="CTD" id="54221"/>
<dbReference type="DisGeNET" id="54221"/>
<dbReference type="GeneCards" id="SNTG2"/>
<dbReference type="HGNC" id="HGNC:13741">
    <property type="gene designation" value="SNTG2"/>
</dbReference>
<dbReference type="HPA" id="ENSG00000172554">
    <property type="expression patterns" value="Low tissue specificity"/>
</dbReference>
<dbReference type="MalaCards" id="SNTG2"/>
<dbReference type="MIM" id="608715">
    <property type="type" value="gene"/>
</dbReference>
<dbReference type="neXtProt" id="NX_Q9NY99"/>
<dbReference type="OpenTargets" id="ENSG00000172554"/>
<dbReference type="PharmGKB" id="PA37807"/>
<dbReference type="VEuPathDB" id="HostDB:ENSG00000172554"/>
<dbReference type="eggNOG" id="KOG3549">
    <property type="taxonomic scope" value="Eukaryota"/>
</dbReference>
<dbReference type="GeneTree" id="ENSGT00950000182863"/>
<dbReference type="HOGENOM" id="CLU_039445_0_0_1"/>
<dbReference type="InParanoid" id="Q9NY99"/>
<dbReference type="OMA" id="LNNNQPW"/>
<dbReference type="OrthoDB" id="9975356at2759"/>
<dbReference type="PAN-GO" id="Q9NY99">
    <property type="GO annotations" value="2 GO annotations based on evolutionary models"/>
</dbReference>
<dbReference type="PhylomeDB" id="Q9NY99"/>
<dbReference type="TreeFam" id="TF317932"/>
<dbReference type="PathwayCommons" id="Q9NY99"/>
<dbReference type="Reactome" id="R-HSA-9913351">
    <property type="pathway name" value="Formation of the dystrophin-glycoprotein complex (DGC)"/>
</dbReference>
<dbReference type="SignaLink" id="Q9NY99"/>
<dbReference type="SIGNOR" id="Q9NY99"/>
<dbReference type="BioGRID-ORCS" id="54221">
    <property type="hits" value="14 hits in 1143 CRISPR screens"/>
</dbReference>
<dbReference type="ChiTaRS" id="SNTG2">
    <property type="organism name" value="human"/>
</dbReference>
<dbReference type="GenomeRNAi" id="54221"/>
<dbReference type="Pharos" id="Q9NY99">
    <property type="development level" value="Tbio"/>
</dbReference>
<dbReference type="PRO" id="PR:Q9NY99"/>
<dbReference type="Proteomes" id="UP000005640">
    <property type="component" value="Chromosome 2"/>
</dbReference>
<dbReference type="RNAct" id="Q9NY99">
    <property type="molecule type" value="protein"/>
</dbReference>
<dbReference type="Bgee" id="ENSG00000172554">
    <property type="expression patterns" value="Expressed in sural nerve and 98 other cell types or tissues"/>
</dbReference>
<dbReference type="ExpressionAtlas" id="Q9NY99">
    <property type="expression patterns" value="baseline and differential"/>
</dbReference>
<dbReference type="GO" id="GO:0005737">
    <property type="term" value="C:cytoplasm"/>
    <property type="evidence" value="ECO:0007669"/>
    <property type="project" value="UniProtKB-KW"/>
</dbReference>
<dbReference type="GO" id="GO:0005856">
    <property type="term" value="C:cytoskeleton"/>
    <property type="evidence" value="ECO:0007669"/>
    <property type="project" value="UniProtKB-SubCell"/>
</dbReference>
<dbReference type="GO" id="GO:0016010">
    <property type="term" value="C:dystrophin-associated glycoprotein complex"/>
    <property type="evidence" value="ECO:0000318"/>
    <property type="project" value="GO_Central"/>
</dbReference>
<dbReference type="GO" id="GO:0005654">
    <property type="term" value="C:nucleoplasm"/>
    <property type="evidence" value="ECO:0000314"/>
    <property type="project" value="HPA"/>
</dbReference>
<dbReference type="GO" id="GO:0005886">
    <property type="term" value="C:plasma membrane"/>
    <property type="evidence" value="ECO:0000314"/>
    <property type="project" value="HPA"/>
</dbReference>
<dbReference type="GO" id="GO:0042383">
    <property type="term" value="C:sarcolemma"/>
    <property type="evidence" value="ECO:0007669"/>
    <property type="project" value="UniProtKB-SubCell"/>
</dbReference>
<dbReference type="GO" id="GO:0016013">
    <property type="term" value="C:syntrophin complex"/>
    <property type="evidence" value="ECO:0000304"/>
    <property type="project" value="ProtInc"/>
</dbReference>
<dbReference type="GO" id="GO:0003779">
    <property type="term" value="F:actin binding"/>
    <property type="evidence" value="ECO:0007669"/>
    <property type="project" value="UniProtKB-KW"/>
</dbReference>
<dbReference type="GO" id="GO:0097109">
    <property type="term" value="F:neuroligin family protein binding"/>
    <property type="evidence" value="ECO:0000353"/>
    <property type="project" value="BHF-UCL"/>
</dbReference>
<dbReference type="GO" id="GO:0030165">
    <property type="term" value="F:PDZ domain binding"/>
    <property type="evidence" value="ECO:0000353"/>
    <property type="project" value="UniProtKB"/>
</dbReference>
<dbReference type="GO" id="GO:0005198">
    <property type="term" value="F:structural molecule activity"/>
    <property type="evidence" value="ECO:0007669"/>
    <property type="project" value="InterPro"/>
</dbReference>
<dbReference type="GO" id="GO:0007417">
    <property type="term" value="P:central nervous system development"/>
    <property type="evidence" value="ECO:0000304"/>
    <property type="project" value="ProtInc"/>
</dbReference>
<dbReference type="CDD" id="cd06801">
    <property type="entry name" value="PDZ_syntrophin-like"/>
    <property type="match status" value="1"/>
</dbReference>
<dbReference type="FunFam" id="2.30.42.10:FF:000080">
    <property type="entry name" value="Syntrophin gamma 1"/>
    <property type="match status" value="1"/>
</dbReference>
<dbReference type="Gene3D" id="2.30.42.10">
    <property type="match status" value="1"/>
</dbReference>
<dbReference type="InterPro" id="IPR001478">
    <property type="entry name" value="PDZ"/>
</dbReference>
<dbReference type="InterPro" id="IPR036034">
    <property type="entry name" value="PDZ_sf"/>
</dbReference>
<dbReference type="InterPro" id="IPR015482">
    <property type="entry name" value="Syntrophin"/>
</dbReference>
<dbReference type="InterPro" id="IPR055108">
    <property type="entry name" value="Syntrophin_4th"/>
</dbReference>
<dbReference type="PANTHER" id="PTHR10554:SF3">
    <property type="entry name" value="GAMMA-2-SYNTROPHIN"/>
    <property type="match status" value="1"/>
</dbReference>
<dbReference type="PANTHER" id="PTHR10554">
    <property type="entry name" value="SYNTROPHIN"/>
    <property type="match status" value="1"/>
</dbReference>
<dbReference type="Pfam" id="PF00595">
    <property type="entry name" value="PDZ"/>
    <property type="match status" value="1"/>
</dbReference>
<dbReference type="Pfam" id="PF23012">
    <property type="entry name" value="Syntrophin_4th"/>
    <property type="match status" value="1"/>
</dbReference>
<dbReference type="SMART" id="SM00228">
    <property type="entry name" value="PDZ"/>
    <property type="match status" value="1"/>
</dbReference>
<dbReference type="SUPFAM" id="SSF50156">
    <property type="entry name" value="PDZ domain-like"/>
    <property type="match status" value="1"/>
</dbReference>
<dbReference type="SUPFAM" id="SSF50729">
    <property type="entry name" value="PH domain-like"/>
    <property type="match status" value="2"/>
</dbReference>
<dbReference type="PROSITE" id="PS50106">
    <property type="entry name" value="PDZ"/>
    <property type="match status" value="1"/>
</dbReference>
<proteinExistence type="evidence at protein level"/>
<name>SNTG2_HUMAN</name>